<comment type="function">
    <text evidence="1">This is one of the proteins that bind and probably mediate the attachment of the 5S RNA into the large ribosomal subunit, where it forms part of the central protuberance. In the 70S ribosome it contacts protein S13 of the 30S subunit (bridge B1b), connecting the 2 subunits; this bridge is implicated in subunit movement. Contacts the P site tRNA; the 5S rRNA and some of its associated proteins might help stabilize positioning of ribosome-bound tRNAs.</text>
</comment>
<comment type="subunit">
    <text evidence="1">Part of the 50S ribosomal subunit; part of the 5S rRNA/L5/L18/L25 subcomplex. Contacts the 5S rRNA and the P site tRNA. Forms a bridge to the 30S subunit in the 70S ribosome.</text>
</comment>
<comment type="similarity">
    <text evidence="1">Belongs to the universal ribosomal protein uL5 family.</text>
</comment>
<sequence length="179" mass="20397">MARLKEVYRKEIAPKLKEELQLKNVMEVPRITKITLNMGIGEAIGDKKIIDNAVADLEKITGQKVVVTHARKSIAGFKVREGWPIGVKVTLRSDRMYEFLDRLLSISLPRVRDFRGLNAKSFDGRGNYSMGVKEQIIFPEIDYDKIDALRGLDITLTTTARTDDEGRALLRAFNFPFRN</sequence>
<organism>
    <name type="scientific">Stutzerimonas stutzeri (strain A1501)</name>
    <name type="common">Pseudomonas stutzeri</name>
    <dbReference type="NCBI Taxonomy" id="379731"/>
    <lineage>
        <taxon>Bacteria</taxon>
        <taxon>Pseudomonadati</taxon>
        <taxon>Pseudomonadota</taxon>
        <taxon>Gammaproteobacteria</taxon>
        <taxon>Pseudomonadales</taxon>
        <taxon>Pseudomonadaceae</taxon>
        <taxon>Stutzerimonas</taxon>
    </lineage>
</organism>
<proteinExistence type="inferred from homology"/>
<feature type="chain" id="PRO_1000052803" description="Large ribosomal subunit protein uL5">
    <location>
        <begin position="1"/>
        <end position="179"/>
    </location>
</feature>
<reference key="1">
    <citation type="journal article" date="2008" name="Proc. Natl. Acad. Sci. U.S.A.">
        <title>Nitrogen fixation island and rhizosphere competence traits in the genome of root-associated Pseudomonas stutzeri A1501.</title>
        <authorList>
            <person name="Yan Y."/>
            <person name="Yang J."/>
            <person name="Dou Y."/>
            <person name="Chen M."/>
            <person name="Ping S."/>
            <person name="Peng J."/>
            <person name="Lu W."/>
            <person name="Zhang W."/>
            <person name="Yao Z."/>
            <person name="Li H."/>
            <person name="Liu W."/>
            <person name="He S."/>
            <person name="Geng L."/>
            <person name="Zhang X."/>
            <person name="Yang F."/>
            <person name="Yu H."/>
            <person name="Zhan Y."/>
            <person name="Li D."/>
            <person name="Lin Z."/>
            <person name="Wang Y."/>
            <person name="Elmerich C."/>
            <person name="Lin M."/>
            <person name="Jin Q."/>
        </authorList>
    </citation>
    <scope>NUCLEOTIDE SEQUENCE [LARGE SCALE GENOMIC DNA]</scope>
    <source>
        <strain>A1501</strain>
    </source>
</reference>
<keyword id="KW-1185">Reference proteome</keyword>
<keyword id="KW-0687">Ribonucleoprotein</keyword>
<keyword id="KW-0689">Ribosomal protein</keyword>
<keyword id="KW-0694">RNA-binding</keyword>
<keyword id="KW-0699">rRNA-binding</keyword>
<keyword id="KW-0820">tRNA-binding</keyword>
<protein>
    <recommendedName>
        <fullName evidence="1">Large ribosomal subunit protein uL5</fullName>
    </recommendedName>
    <alternativeName>
        <fullName evidence="2">50S ribosomal protein L5</fullName>
    </alternativeName>
</protein>
<gene>
    <name evidence="1" type="primary">rplE</name>
    <name type="ordered locus">PST_0796</name>
</gene>
<accession>A4VHP2</accession>
<dbReference type="EMBL" id="CP000304">
    <property type="protein sequence ID" value="ABP78493.1"/>
    <property type="molecule type" value="Genomic_DNA"/>
</dbReference>
<dbReference type="RefSeq" id="WP_011911991.1">
    <property type="nucleotide sequence ID" value="NC_009434.1"/>
</dbReference>
<dbReference type="SMR" id="A4VHP2"/>
<dbReference type="GeneID" id="66819938"/>
<dbReference type="KEGG" id="psa:PST_0796"/>
<dbReference type="eggNOG" id="COG0094">
    <property type="taxonomic scope" value="Bacteria"/>
</dbReference>
<dbReference type="HOGENOM" id="CLU_061015_2_1_6"/>
<dbReference type="Proteomes" id="UP000000233">
    <property type="component" value="Chromosome"/>
</dbReference>
<dbReference type="GO" id="GO:1990904">
    <property type="term" value="C:ribonucleoprotein complex"/>
    <property type="evidence" value="ECO:0007669"/>
    <property type="project" value="UniProtKB-KW"/>
</dbReference>
<dbReference type="GO" id="GO:0005840">
    <property type="term" value="C:ribosome"/>
    <property type="evidence" value="ECO:0007669"/>
    <property type="project" value="UniProtKB-KW"/>
</dbReference>
<dbReference type="GO" id="GO:0019843">
    <property type="term" value="F:rRNA binding"/>
    <property type="evidence" value="ECO:0007669"/>
    <property type="project" value="UniProtKB-UniRule"/>
</dbReference>
<dbReference type="GO" id="GO:0003735">
    <property type="term" value="F:structural constituent of ribosome"/>
    <property type="evidence" value="ECO:0007669"/>
    <property type="project" value="InterPro"/>
</dbReference>
<dbReference type="GO" id="GO:0000049">
    <property type="term" value="F:tRNA binding"/>
    <property type="evidence" value="ECO:0007669"/>
    <property type="project" value="UniProtKB-UniRule"/>
</dbReference>
<dbReference type="GO" id="GO:0006412">
    <property type="term" value="P:translation"/>
    <property type="evidence" value="ECO:0007669"/>
    <property type="project" value="UniProtKB-UniRule"/>
</dbReference>
<dbReference type="FunFam" id="3.30.1440.10:FF:000001">
    <property type="entry name" value="50S ribosomal protein L5"/>
    <property type="match status" value="1"/>
</dbReference>
<dbReference type="Gene3D" id="3.30.1440.10">
    <property type="match status" value="1"/>
</dbReference>
<dbReference type="HAMAP" id="MF_01333_B">
    <property type="entry name" value="Ribosomal_uL5_B"/>
    <property type="match status" value="1"/>
</dbReference>
<dbReference type="InterPro" id="IPR002132">
    <property type="entry name" value="Ribosomal_uL5"/>
</dbReference>
<dbReference type="InterPro" id="IPR020930">
    <property type="entry name" value="Ribosomal_uL5_bac-type"/>
</dbReference>
<dbReference type="InterPro" id="IPR031309">
    <property type="entry name" value="Ribosomal_uL5_C"/>
</dbReference>
<dbReference type="InterPro" id="IPR020929">
    <property type="entry name" value="Ribosomal_uL5_CS"/>
</dbReference>
<dbReference type="InterPro" id="IPR022803">
    <property type="entry name" value="Ribosomal_uL5_dom_sf"/>
</dbReference>
<dbReference type="InterPro" id="IPR031310">
    <property type="entry name" value="Ribosomal_uL5_N"/>
</dbReference>
<dbReference type="NCBIfam" id="NF000585">
    <property type="entry name" value="PRK00010.1"/>
    <property type="match status" value="1"/>
</dbReference>
<dbReference type="PANTHER" id="PTHR11994">
    <property type="entry name" value="60S RIBOSOMAL PROTEIN L11-RELATED"/>
    <property type="match status" value="1"/>
</dbReference>
<dbReference type="Pfam" id="PF00281">
    <property type="entry name" value="Ribosomal_L5"/>
    <property type="match status" value="1"/>
</dbReference>
<dbReference type="Pfam" id="PF00673">
    <property type="entry name" value="Ribosomal_L5_C"/>
    <property type="match status" value="1"/>
</dbReference>
<dbReference type="PIRSF" id="PIRSF002161">
    <property type="entry name" value="Ribosomal_L5"/>
    <property type="match status" value="1"/>
</dbReference>
<dbReference type="SUPFAM" id="SSF55282">
    <property type="entry name" value="RL5-like"/>
    <property type="match status" value="1"/>
</dbReference>
<dbReference type="PROSITE" id="PS00358">
    <property type="entry name" value="RIBOSOMAL_L5"/>
    <property type="match status" value="1"/>
</dbReference>
<name>RL5_STUS1</name>
<evidence type="ECO:0000255" key="1">
    <source>
        <dbReference type="HAMAP-Rule" id="MF_01333"/>
    </source>
</evidence>
<evidence type="ECO:0000305" key="2"/>